<reference key="1">
    <citation type="journal article" date="2005" name="Nature">
        <title>Genomic sequence of the pathogenic and allergenic filamentous fungus Aspergillus fumigatus.</title>
        <authorList>
            <person name="Nierman W.C."/>
            <person name="Pain A."/>
            <person name="Anderson M.J."/>
            <person name="Wortman J.R."/>
            <person name="Kim H.S."/>
            <person name="Arroyo J."/>
            <person name="Berriman M."/>
            <person name="Abe K."/>
            <person name="Archer D.B."/>
            <person name="Bermejo C."/>
            <person name="Bennett J.W."/>
            <person name="Bowyer P."/>
            <person name="Chen D."/>
            <person name="Collins M."/>
            <person name="Coulsen R."/>
            <person name="Davies R."/>
            <person name="Dyer P.S."/>
            <person name="Farman M.L."/>
            <person name="Fedorova N."/>
            <person name="Fedorova N.D."/>
            <person name="Feldblyum T.V."/>
            <person name="Fischer R."/>
            <person name="Fosker N."/>
            <person name="Fraser A."/>
            <person name="Garcia J.L."/>
            <person name="Garcia M.J."/>
            <person name="Goble A."/>
            <person name="Goldman G.H."/>
            <person name="Gomi K."/>
            <person name="Griffith-Jones S."/>
            <person name="Gwilliam R."/>
            <person name="Haas B.J."/>
            <person name="Haas H."/>
            <person name="Harris D.E."/>
            <person name="Horiuchi H."/>
            <person name="Huang J."/>
            <person name="Humphray S."/>
            <person name="Jimenez J."/>
            <person name="Keller N."/>
            <person name="Khouri H."/>
            <person name="Kitamoto K."/>
            <person name="Kobayashi T."/>
            <person name="Konzack S."/>
            <person name="Kulkarni R."/>
            <person name="Kumagai T."/>
            <person name="Lafton A."/>
            <person name="Latge J.-P."/>
            <person name="Li W."/>
            <person name="Lord A."/>
            <person name="Lu C."/>
            <person name="Majoros W.H."/>
            <person name="May G.S."/>
            <person name="Miller B.L."/>
            <person name="Mohamoud Y."/>
            <person name="Molina M."/>
            <person name="Monod M."/>
            <person name="Mouyna I."/>
            <person name="Mulligan S."/>
            <person name="Murphy L.D."/>
            <person name="O'Neil S."/>
            <person name="Paulsen I."/>
            <person name="Penalva M.A."/>
            <person name="Pertea M."/>
            <person name="Price C."/>
            <person name="Pritchard B.L."/>
            <person name="Quail M.A."/>
            <person name="Rabbinowitsch E."/>
            <person name="Rawlins N."/>
            <person name="Rajandream M.A."/>
            <person name="Reichard U."/>
            <person name="Renauld H."/>
            <person name="Robson G.D."/>
            <person name="Rodriguez de Cordoba S."/>
            <person name="Rodriguez-Pena J.M."/>
            <person name="Ronning C.M."/>
            <person name="Rutter S."/>
            <person name="Salzberg S.L."/>
            <person name="Sanchez M."/>
            <person name="Sanchez-Ferrero J.C."/>
            <person name="Saunders D."/>
            <person name="Seeger K."/>
            <person name="Squares R."/>
            <person name="Squares S."/>
            <person name="Takeuchi M."/>
            <person name="Tekaia F."/>
            <person name="Turner G."/>
            <person name="Vazquez de Aldana C.R."/>
            <person name="Weidman J."/>
            <person name="White O."/>
            <person name="Woodward J.R."/>
            <person name="Yu J.-H."/>
            <person name="Fraser C.M."/>
            <person name="Galagan J.E."/>
            <person name="Asai K."/>
            <person name="Machida M."/>
            <person name="Hall N."/>
            <person name="Barrell B.G."/>
            <person name="Denning D.W."/>
        </authorList>
    </citation>
    <scope>NUCLEOTIDE SEQUENCE [LARGE SCALE GENOMIC DNA]</scope>
    <source>
        <strain>ATCC MYA-4609 / CBS 101355 / FGSC A1100 / Af293</strain>
    </source>
</reference>
<reference key="2">
    <citation type="journal article" date="2010" name="Planta Med.">
        <title>Anti-inflammatory, cyclooxygenase (COX)-2, COX-1 inhibitory, and free radical scavenging effects of Rumex nepalensis.</title>
        <authorList>
            <person name="Gautam R."/>
            <person name="Karkhile K.V."/>
            <person name="Bhutani K.K."/>
            <person name="Jachak S.M."/>
        </authorList>
    </citation>
    <scope>BIOTECHNOLOGY</scope>
</reference>
<reference key="3">
    <citation type="journal article" date="2012" name="Appl. Environ. Microbiol.">
        <title>Genome-based cluster deletion reveals an endocrocin biosynthetic pathway in Aspergillus fumigatus.</title>
        <authorList>
            <person name="Lim F.Y."/>
            <person name="Hou Y."/>
            <person name="Chen Y."/>
            <person name="Oh J.H."/>
            <person name="Lee I."/>
            <person name="Bugni T.S."/>
            <person name="Keller N.P."/>
        </authorList>
    </citation>
    <scope>FUNCTION</scope>
    <scope>DISRUPTION PHENOTYPE</scope>
</reference>
<reference key="4">
    <citation type="journal article" date="2013" name="PLoS Pathog.">
        <title>Low-volume toolbox for the discovery of immunosuppressive fungal secondary metabolites.</title>
        <authorList>
            <person name="Berthier E."/>
            <person name="Lim F.Y."/>
            <person name="Deng Q."/>
            <person name="Guo C.J."/>
            <person name="Kontoyiannis D.P."/>
            <person name="Wang C.C."/>
            <person name="Rindy J."/>
            <person name="Beebe D.J."/>
            <person name="Huttenlocher A."/>
            <person name="Keller N.P."/>
        </authorList>
    </citation>
    <scope>FUNCTION</scope>
    <scope>TISSUE SPECIFICITY</scope>
</reference>
<reference key="5">
    <citation type="journal article" date="2016" name="Environ. Microbiol.">
        <title>Redundant synthesis of a conidial polyketide by two distinct secondary metabolite clusters in Aspergillus fumigatus.</title>
        <authorList>
            <person name="Throckmorton K."/>
            <person name="Lim F.Y."/>
            <person name="Kontoyiannis D.P."/>
            <person name="Zheng W."/>
            <person name="Keller N.P."/>
        </authorList>
    </citation>
    <scope>INDUCTION</scope>
</reference>
<organism>
    <name type="scientific">Aspergillus fumigatus (strain ATCC MYA-4609 / CBS 101355 / FGSC A1100 / Af293)</name>
    <name type="common">Neosartorya fumigata</name>
    <dbReference type="NCBI Taxonomy" id="330879"/>
    <lineage>
        <taxon>Eukaryota</taxon>
        <taxon>Fungi</taxon>
        <taxon>Dikarya</taxon>
        <taxon>Ascomycota</taxon>
        <taxon>Pezizomycotina</taxon>
        <taxon>Eurotiomycetes</taxon>
        <taxon>Eurotiomycetidae</taxon>
        <taxon>Eurotiales</taxon>
        <taxon>Aspergillaceae</taxon>
        <taxon>Aspergillus</taxon>
        <taxon>Aspergillus subgen. Fumigati</taxon>
    </lineage>
</organism>
<evidence type="ECO:0000255" key="1"/>
<evidence type="ECO:0000269" key="2">
    <source>
    </source>
</evidence>
<evidence type="ECO:0000269" key="3">
    <source>
    </source>
</evidence>
<evidence type="ECO:0000269" key="4">
    <source>
    </source>
</evidence>
<evidence type="ECO:0000269" key="5">
    <source>
    </source>
</evidence>
<evidence type="ECO:0000303" key="6">
    <source>
    </source>
</evidence>
<evidence type="ECO:0000305" key="7"/>
<evidence type="ECO:0000305" key="8">
    <source>
    </source>
</evidence>
<evidence type="ECO:0000305" key="9">
    <source>
    </source>
</evidence>
<feature type="chain" id="PRO_0000437095" description="Anthrone oxygenase encC">
    <location>
        <begin position="1"/>
        <end position="181"/>
    </location>
</feature>
<feature type="transmembrane region" description="Helical" evidence="1">
    <location>
        <begin position="1"/>
        <end position="21"/>
    </location>
</feature>
<feature type="transmembrane region" description="Helical" evidence="1">
    <location>
        <begin position="65"/>
        <end position="81"/>
    </location>
</feature>
<feature type="transmembrane region" description="Helical" evidence="1">
    <location>
        <begin position="88"/>
        <end position="108"/>
    </location>
</feature>
<feature type="transmembrane region" description="Helical" evidence="1">
    <location>
        <begin position="153"/>
        <end position="173"/>
    </location>
</feature>
<dbReference type="EC" id="1.-.-.-" evidence="8"/>
<dbReference type="EMBL" id="AAHF01000017">
    <property type="protein sequence ID" value="EBA27176.1"/>
    <property type="molecule type" value="Genomic_DNA"/>
</dbReference>
<dbReference type="RefSeq" id="XP_001481526.1">
    <property type="nucleotide sequence ID" value="XM_001481476.1"/>
</dbReference>
<dbReference type="STRING" id="330879.A4DA85"/>
<dbReference type="EnsemblFungi" id="EBA27176">
    <property type="protein sequence ID" value="EBA27176"/>
    <property type="gene ID" value="AFUA_4G00225"/>
</dbReference>
<dbReference type="GeneID" id="5077074"/>
<dbReference type="KEGG" id="afm:AFUA_4G00225"/>
<dbReference type="VEuPathDB" id="FungiDB:Afu4g00225"/>
<dbReference type="eggNOG" id="ENOG502SBMN">
    <property type="taxonomic scope" value="Eukaryota"/>
</dbReference>
<dbReference type="HOGENOM" id="CLU_105974_1_0_1"/>
<dbReference type="InParanoid" id="A4DA85"/>
<dbReference type="OMA" id="LAWCASD"/>
<dbReference type="OrthoDB" id="5954308at2759"/>
<dbReference type="Proteomes" id="UP000002530">
    <property type="component" value="Chromosome 4"/>
</dbReference>
<dbReference type="GO" id="GO:0016020">
    <property type="term" value="C:membrane"/>
    <property type="evidence" value="ECO:0007669"/>
    <property type="project" value="UniProtKB-SubCell"/>
</dbReference>
<dbReference type="GO" id="GO:0004497">
    <property type="term" value="F:monooxygenase activity"/>
    <property type="evidence" value="ECO:0007669"/>
    <property type="project" value="UniProtKB-KW"/>
</dbReference>
<dbReference type="GO" id="GO:1900602">
    <property type="term" value="P:endocrocin biosynthetic process"/>
    <property type="evidence" value="ECO:0000315"/>
    <property type="project" value="AspGD"/>
</dbReference>
<dbReference type="InterPro" id="IPR013901">
    <property type="entry name" value="Anthrone_oxy"/>
</dbReference>
<dbReference type="PANTHER" id="PTHR35042">
    <property type="entry name" value="ANTHRONE OXYGENASE ENCC"/>
    <property type="match status" value="1"/>
</dbReference>
<dbReference type="PANTHER" id="PTHR35042:SF1">
    <property type="entry name" value="DUF1772-DOMAIN-CONTAINING PROTEIN"/>
    <property type="match status" value="1"/>
</dbReference>
<dbReference type="Pfam" id="PF08592">
    <property type="entry name" value="Anthrone_oxy"/>
    <property type="match status" value="1"/>
</dbReference>
<comment type="function">
    <text evidence="3 4">Anthrone oxygenase; part of the gene cluster that mediates the biosynthesis of endocrocin, a simple anthraquinone interesting for many biotechnological applications (PubMed:22492455, PubMed:23592999). The pathway begins with the synthesis of atrochrysone thioester by the polyketide synthase (PKS) encA (PubMed:22492455). The atrochrysone carboxyl ACP thioesterase encB then breaks the thioester bond and releases the atrochrysone carboxylic acid from encA (PubMed:22492455). The atrochrysone carboxylic acid is then converted to endocrocin anthrone which is further oxidized into endocrocin by the anthrone oxygenase encC (PubMed:22492455). The exact function of encD has not been identified yet, but it negatively regulates endocrocin production, likely through the modification of endocrocin itself (PubMed:22492455).</text>
</comment>
<comment type="subcellular location">
    <subcellularLocation>
        <location evidence="1">Membrane</location>
        <topology evidence="1">Multi-pass membrane protein</topology>
    </subcellularLocation>
</comment>
<comment type="tissue specificity">
    <text evidence="9">Endocrocin is specifically produced in conidia.</text>
</comment>
<comment type="induction">
    <text evidence="5">Expression is positively regulated by the transcription factors brlA and laeA (PubMed:26242966).</text>
</comment>
<comment type="disruption phenotype">
    <text evidence="3">Leads to unstable anthrone production and abolishes the production of endocrocin (PubMed:22492455).</text>
</comment>
<comment type="biotechnology">
    <text evidence="2">Endocrocin and related anthraquinones compounds have interesting activities for medicinal uses, including anti-inflammatory activity (PubMed:20379952).</text>
</comment>
<comment type="similarity">
    <text evidence="7">Belongs to the anthrone oxygenase family.</text>
</comment>
<accession>A4DA85</accession>
<gene>
    <name evidence="6" type="primary">encC</name>
    <name type="ORF">AFUA_4G00225</name>
</gene>
<name>ENCC_ASPFU</name>
<sequence length="181" mass="19473">MASVQGLIKIVAITGGVWLSGKITAHSLVSVPALLQTRSADGLSPCTILRVWRRIYEQGHRHSPQIAACTSTAFAYLAWCASDRTPRLLYGTAACSVMGIVPYTLLFMGPTNSRLLERSAAEEEKVPGATRGEDMVNVPSEMTTEELLSHWRFLAGIRGLLPLAGGILGLFAALYSNEGAR</sequence>
<protein>
    <recommendedName>
        <fullName evidence="6">Anthrone oxygenase encC</fullName>
        <ecNumber evidence="8">1.-.-.-</ecNumber>
    </recommendedName>
    <alternativeName>
        <fullName evidence="6">Endocrocin synthesis protein C</fullName>
    </alternativeName>
</protein>
<proteinExistence type="evidence at protein level"/>
<keyword id="KW-0472">Membrane</keyword>
<keyword id="KW-0503">Monooxygenase</keyword>
<keyword id="KW-0560">Oxidoreductase</keyword>
<keyword id="KW-1185">Reference proteome</keyword>
<keyword id="KW-0812">Transmembrane</keyword>
<keyword id="KW-1133">Transmembrane helix</keyword>